<evidence type="ECO:0000250" key="1"/>
<evidence type="ECO:0000269" key="2">
    <source>
    </source>
</evidence>
<evidence type="ECO:0000269" key="3">
    <source>
    </source>
</evidence>
<evidence type="ECO:0000269" key="4">
    <source>
    </source>
</evidence>
<evidence type="ECO:0000303" key="5">
    <source>
    </source>
</evidence>
<evidence type="ECO:0000303" key="6">
    <source>
    </source>
</evidence>
<evidence type="ECO:0000305" key="7"/>
<evidence type="ECO:0000305" key="8">
    <source>
    </source>
</evidence>
<evidence type="ECO:0000305" key="9">
    <source>
    </source>
</evidence>
<evidence type="ECO:0000312" key="10">
    <source>
        <dbReference type="HGNC" id="HGNC:15654"/>
    </source>
</evidence>
<reference key="1">
    <citation type="journal article" date="2001" name="Biochem. Biophys. Res. Commun.">
        <title>Identification and tissue distribution of the novel human cytochrome P450 2S1 (CYP2S1).</title>
        <authorList>
            <person name="Rylander T."/>
            <person name="Neve E."/>
            <person name="Ingelman-Sundberg M."/>
            <person name="Oscarson M."/>
        </authorList>
    </citation>
    <scope>NUCLEOTIDE SEQUENCE [MRNA] (ISOFORM 1)</scope>
    <scope>SUBCELLULAR LOCATION</scope>
    <scope>TISSUE SPECIFICITY</scope>
</reference>
<reference key="2">
    <citation type="journal article" date="2003" name="Genome Res.">
        <title>The secreted protein discovery initiative (SPDI), a large-scale effort to identify novel human secreted and transmembrane proteins: a bioinformatics assessment.</title>
        <authorList>
            <person name="Clark H.F."/>
            <person name="Gurney A.L."/>
            <person name="Abaya E."/>
            <person name="Baker K."/>
            <person name="Baldwin D.T."/>
            <person name="Brush J."/>
            <person name="Chen J."/>
            <person name="Chow B."/>
            <person name="Chui C."/>
            <person name="Crowley C."/>
            <person name="Currell B."/>
            <person name="Deuel B."/>
            <person name="Dowd P."/>
            <person name="Eaton D."/>
            <person name="Foster J.S."/>
            <person name="Grimaldi C."/>
            <person name="Gu Q."/>
            <person name="Hass P.E."/>
            <person name="Heldens S."/>
            <person name="Huang A."/>
            <person name="Kim H.S."/>
            <person name="Klimowski L."/>
            <person name="Jin Y."/>
            <person name="Johnson S."/>
            <person name="Lee J."/>
            <person name="Lewis L."/>
            <person name="Liao D."/>
            <person name="Mark M.R."/>
            <person name="Robbie E."/>
            <person name="Sanchez C."/>
            <person name="Schoenfeld J."/>
            <person name="Seshagiri S."/>
            <person name="Simmons L."/>
            <person name="Singh J."/>
            <person name="Smith V."/>
            <person name="Stinson J."/>
            <person name="Vagts A."/>
            <person name="Vandlen R.L."/>
            <person name="Watanabe C."/>
            <person name="Wieand D."/>
            <person name="Woods K."/>
            <person name="Xie M.-H."/>
            <person name="Yansura D.G."/>
            <person name="Yi S."/>
            <person name="Yu G."/>
            <person name="Yuan J."/>
            <person name="Zhang M."/>
            <person name="Zhang Z."/>
            <person name="Goddard A.D."/>
            <person name="Wood W.I."/>
            <person name="Godowski P.J."/>
            <person name="Gray A.M."/>
        </authorList>
    </citation>
    <scope>NUCLEOTIDE SEQUENCE [LARGE SCALE MRNA] (ISOFORM 1)</scope>
</reference>
<reference key="3">
    <citation type="journal article" date="2004" name="Nat. Genet.">
        <title>Complete sequencing and characterization of 21,243 full-length human cDNAs.</title>
        <authorList>
            <person name="Ota T."/>
            <person name="Suzuki Y."/>
            <person name="Nishikawa T."/>
            <person name="Otsuki T."/>
            <person name="Sugiyama T."/>
            <person name="Irie R."/>
            <person name="Wakamatsu A."/>
            <person name="Hayashi K."/>
            <person name="Sato H."/>
            <person name="Nagai K."/>
            <person name="Kimura K."/>
            <person name="Makita H."/>
            <person name="Sekine M."/>
            <person name="Obayashi M."/>
            <person name="Nishi T."/>
            <person name="Shibahara T."/>
            <person name="Tanaka T."/>
            <person name="Ishii S."/>
            <person name="Yamamoto J."/>
            <person name="Saito K."/>
            <person name="Kawai Y."/>
            <person name="Isono Y."/>
            <person name="Nakamura Y."/>
            <person name="Nagahari K."/>
            <person name="Murakami K."/>
            <person name="Yasuda T."/>
            <person name="Iwayanagi T."/>
            <person name="Wagatsuma M."/>
            <person name="Shiratori A."/>
            <person name="Sudo H."/>
            <person name="Hosoiri T."/>
            <person name="Kaku Y."/>
            <person name="Kodaira H."/>
            <person name="Kondo H."/>
            <person name="Sugawara M."/>
            <person name="Takahashi M."/>
            <person name="Kanda K."/>
            <person name="Yokoi T."/>
            <person name="Furuya T."/>
            <person name="Kikkawa E."/>
            <person name="Omura Y."/>
            <person name="Abe K."/>
            <person name="Kamihara K."/>
            <person name="Katsuta N."/>
            <person name="Sato K."/>
            <person name="Tanikawa M."/>
            <person name="Yamazaki M."/>
            <person name="Ninomiya K."/>
            <person name="Ishibashi T."/>
            <person name="Yamashita H."/>
            <person name="Murakawa K."/>
            <person name="Fujimori K."/>
            <person name="Tanai H."/>
            <person name="Kimata M."/>
            <person name="Watanabe M."/>
            <person name="Hiraoka S."/>
            <person name="Chiba Y."/>
            <person name="Ishida S."/>
            <person name="Ono Y."/>
            <person name="Takiguchi S."/>
            <person name="Watanabe S."/>
            <person name="Yosida M."/>
            <person name="Hotuta T."/>
            <person name="Kusano J."/>
            <person name="Kanehori K."/>
            <person name="Takahashi-Fujii A."/>
            <person name="Hara H."/>
            <person name="Tanase T.-O."/>
            <person name="Nomura Y."/>
            <person name="Togiya S."/>
            <person name="Komai F."/>
            <person name="Hara R."/>
            <person name="Takeuchi K."/>
            <person name="Arita M."/>
            <person name="Imose N."/>
            <person name="Musashino K."/>
            <person name="Yuuki H."/>
            <person name="Oshima A."/>
            <person name="Sasaki N."/>
            <person name="Aotsuka S."/>
            <person name="Yoshikawa Y."/>
            <person name="Matsunawa H."/>
            <person name="Ichihara T."/>
            <person name="Shiohata N."/>
            <person name="Sano S."/>
            <person name="Moriya S."/>
            <person name="Momiyama H."/>
            <person name="Satoh N."/>
            <person name="Takami S."/>
            <person name="Terashima Y."/>
            <person name="Suzuki O."/>
            <person name="Nakagawa S."/>
            <person name="Senoh A."/>
            <person name="Mizoguchi H."/>
            <person name="Goto Y."/>
            <person name="Shimizu F."/>
            <person name="Wakebe H."/>
            <person name="Hishigaki H."/>
            <person name="Watanabe T."/>
            <person name="Sugiyama A."/>
            <person name="Takemoto M."/>
            <person name="Kawakami B."/>
            <person name="Yamazaki M."/>
            <person name="Watanabe K."/>
            <person name="Kumagai A."/>
            <person name="Itakura S."/>
            <person name="Fukuzumi Y."/>
            <person name="Fujimori Y."/>
            <person name="Komiyama M."/>
            <person name="Tashiro H."/>
            <person name="Tanigami A."/>
            <person name="Fujiwara T."/>
            <person name="Ono T."/>
            <person name="Yamada K."/>
            <person name="Fujii Y."/>
            <person name="Ozaki K."/>
            <person name="Hirao M."/>
            <person name="Ohmori Y."/>
            <person name="Kawabata A."/>
            <person name="Hikiji T."/>
            <person name="Kobatake N."/>
            <person name="Inagaki H."/>
            <person name="Ikema Y."/>
            <person name="Okamoto S."/>
            <person name="Okitani R."/>
            <person name="Kawakami T."/>
            <person name="Noguchi S."/>
            <person name="Itoh T."/>
            <person name="Shigeta K."/>
            <person name="Senba T."/>
            <person name="Matsumura K."/>
            <person name="Nakajima Y."/>
            <person name="Mizuno T."/>
            <person name="Morinaga M."/>
            <person name="Sasaki M."/>
            <person name="Togashi T."/>
            <person name="Oyama M."/>
            <person name="Hata H."/>
            <person name="Watanabe M."/>
            <person name="Komatsu T."/>
            <person name="Mizushima-Sugano J."/>
            <person name="Satoh T."/>
            <person name="Shirai Y."/>
            <person name="Takahashi Y."/>
            <person name="Nakagawa K."/>
            <person name="Okumura K."/>
            <person name="Nagase T."/>
            <person name="Nomura N."/>
            <person name="Kikuchi H."/>
            <person name="Masuho Y."/>
            <person name="Yamashita R."/>
            <person name="Nakai K."/>
            <person name="Yada T."/>
            <person name="Nakamura Y."/>
            <person name="Ohara O."/>
            <person name="Isogai T."/>
            <person name="Sugano S."/>
        </authorList>
    </citation>
    <scope>NUCLEOTIDE SEQUENCE [LARGE SCALE MRNA] (ISOFORM 2)</scope>
</reference>
<reference key="4">
    <citation type="journal article" date="2004" name="Genome Res.">
        <title>The status, quality, and expansion of the NIH full-length cDNA project: the Mammalian Gene Collection (MGC).</title>
        <authorList>
            <consortium name="The MGC Project Team"/>
        </authorList>
    </citation>
    <scope>NUCLEOTIDE SEQUENCE [LARGE SCALE MRNA] (ISOFORM 1)</scope>
    <source>
        <tissue>Blood</tissue>
    </source>
</reference>
<reference key="5">
    <citation type="journal article" date="2003" name="Lancet">
        <title>Cutaneous expression of cytochrome P450 CYP2S1: individuality in regulation by therapeutic agents for psoriasis and other skin diseases.</title>
        <authorList>
            <person name="Smith G."/>
            <person name="Wolf C.R."/>
            <person name="Deeni Y.Y."/>
            <person name="Dawe R.S."/>
            <person name="Evans A.T."/>
            <person name="Comrie M.M."/>
            <person name="Ferguson J."/>
            <person name="Ibbotson S.H."/>
        </authorList>
    </citation>
    <scope>FUNCTION</scope>
    <scope>CATALYTIC ACTIVITY</scope>
    <scope>TISSUE SPECIFICITY</scope>
    <scope>INDUCTION BY ULTRAVIOLET RADIATION</scope>
</reference>
<reference key="6">
    <citation type="journal article" date="2011" name="Drug Metab. Dispos.">
        <title>Human CYP2S1 metabolizes cyclooxygenase- and lipoxygenase-derived eicosanoids.</title>
        <authorList>
            <person name="Bui P."/>
            <person name="Imaizumi S."/>
            <person name="Beedanagari S.R."/>
            <person name="Reddy S.T."/>
            <person name="Hankinson O."/>
        </authorList>
    </citation>
    <scope>FUNCTION</scope>
    <scope>CATALYTIC ACTIVITY</scope>
    <scope>PATHWAY</scope>
</reference>
<keyword id="KW-0025">Alternative splicing</keyword>
<keyword id="KW-0256">Endoplasmic reticulum</keyword>
<keyword id="KW-0276">Fatty acid metabolism</keyword>
<keyword id="KW-0349">Heme</keyword>
<keyword id="KW-0408">Iron</keyword>
<keyword id="KW-0413">Isomerase</keyword>
<keyword id="KW-0443">Lipid metabolism</keyword>
<keyword id="KW-0456">Lyase</keyword>
<keyword id="KW-0472">Membrane</keyword>
<keyword id="KW-0479">Metal-binding</keyword>
<keyword id="KW-0492">Microsome</keyword>
<keyword id="KW-0503">Monooxygenase</keyword>
<keyword id="KW-0560">Oxidoreductase</keyword>
<keyword id="KW-1267">Proteomics identification</keyword>
<keyword id="KW-1185">Reference proteome</keyword>
<comment type="function">
    <text evidence="3 4">A cytochrome P450 monooxygenase involved in the metabolism of retinoids and eicosanoids (PubMed:12711469, PubMed:21068195). In epidermis, may contribute to the oxidative metabolism of all-trans-retinoic acid. For this activity, uses molecular oxygen inserting one oxygen atom into a substrate, and reducing the second into a water molecule, with two electrons provided by NADPH via cytochrome P450 reductase (NADPH--hemoprotein reductase) (PubMed:12711469). Additionally, displays peroxidase and isomerase activities toward various oxygenated eicosanoids such as prostaglandin H2 (PGH2) and hydroperoxyeicosatetraenoates (HPETEs) (PubMed:21068195). Independently of cytochrome P450 reductase, NADPH, and O2, catalyzes the breakdown of PGH2 to hydroxyheptadecatrienoic acid (HHT) and malondialdehyde (MDA), which is known to act as a mediator of DNA damage (PubMed:21068195).</text>
</comment>
<comment type="catalytic activity">
    <reaction evidence="3">
        <text>all-trans-retinoate + reduced [NADPH--hemoprotein reductase] + O2 = all-trans-5,6-epoxyretinoate + oxidized [NADPH--hemoprotein reductase] + H2O + H(+)</text>
        <dbReference type="Rhea" id="RHEA:55860"/>
        <dbReference type="Rhea" id="RHEA-COMP:11964"/>
        <dbReference type="Rhea" id="RHEA-COMP:11965"/>
        <dbReference type="ChEBI" id="CHEBI:15377"/>
        <dbReference type="ChEBI" id="CHEBI:15378"/>
        <dbReference type="ChEBI" id="CHEBI:15379"/>
        <dbReference type="ChEBI" id="CHEBI:35291"/>
        <dbReference type="ChEBI" id="CHEBI:57618"/>
        <dbReference type="ChEBI" id="CHEBI:58210"/>
        <dbReference type="ChEBI" id="CHEBI:139183"/>
    </reaction>
    <physiologicalReaction direction="left-to-right" evidence="8">
        <dbReference type="Rhea" id="RHEA:55861"/>
    </physiologicalReaction>
</comment>
<comment type="catalytic activity">
    <reaction evidence="3">
        <text>all-trans-retinoate + reduced [NADPH--hemoprotein reductase] + O2 = all-trans-4-hydroxyretinoate + oxidized [NADPH--hemoprotein reductase] + H2O + H(+)</text>
        <dbReference type="Rhea" id="RHEA:51984"/>
        <dbReference type="Rhea" id="RHEA-COMP:11964"/>
        <dbReference type="Rhea" id="RHEA-COMP:11965"/>
        <dbReference type="ChEBI" id="CHEBI:15377"/>
        <dbReference type="ChEBI" id="CHEBI:15378"/>
        <dbReference type="ChEBI" id="CHEBI:15379"/>
        <dbReference type="ChEBI" id="CHEBI:35291"/>
        <dbReference type="ChEBI" id="CHEBI:57618"/>
        <dbReference type="ChEBI" id="CHEBI:58210"/>
        <dbReference type="ChEBI" id="CHEBI:134178"/>
    </reaction>
    <physiologicalReaction direction="left-to-right" evidence="8">
        <dbReference type="Rhea" id="RHEA:51985"/>
    </physiologicalReaction>
</comment>
<comment type="catalytic activity">
    <reaction evidence="4">
        <text>(5S)-hydroperoxy-(6E,8Z,11Z,14Z)-eicosatetraenoate = 5-oxo-(6E,8Z,11Z,14Z)-eicosatetraenoate + H2O</text>
        <dbReference type="Rhea" id="RHEA:48632"/>
        <dbReference type="ChEBI" id="CHEBI:15377"/>
        <dbReference type="ChEBI" id="CHEBI:57450"/>
        <dbReference type="ChEBI" id="CHEBI:65342"/>
    </reaction>
    <physiologicalReaction direction="left-to-right" evidence="9">
        <dbReference type="Rhea" id="RHEA:48633"/>
    </physiologicalReaction>
</comment>
<comment type="catalytic activity">
    <reaction evidence="4">
        <text>(12S)-hydroperoxy-(5Z,8Z,10E,14Z)-eicosatetraenoate = 12-oxo-(5Z,8Z,10E,14Z)-eicosatetraenoate + H2O</text>
        <dbReference type="Rhea" id="RHEA:37947"/>
        <dbReference type="ChEBI" id="CHEBI:15377"/>
        <dbReference type="ChEBI" id="CHEBI:57444"/>
        <dbReference type="ChEBI" id="CHEBI:75231"/>
        <dbReference type="EC" id="4.2.1.152"/>
    </reaction>
    <physiologicalReaction direction="left-to-right" evidence="9">
        <dbReference type="Rhea" id="RHEA:37948"/>
    </physiologicalReaction>
</comment>
<comment type="catalytic activity">
    <reaction evidence="4">
        <text>(15S)-hydroperoxy-(5Z,8Z,11Z,13E)-eicosatetraenoate = 15-oxo-(5Z,8Z,11Z,13E)-eicosatetraenoate + H2O</text>
        <dbReference type="Rhea" id="RHEA:48636"/>
        <dbReference type="ChEBI" id="CHEBI:15377"/>
        <dbReference type="ChEBI" id="CHEBI:57410"/>
        <dbReference type="ChEBI" id="CHEBI:57446"/>
    </reaction>
    <physiologicalReaction direction="left-to-right" evidence="9">
        <dbReference type="Rhea" id="RHEA:48637"/>
    </physiologicalReaction>
</comment>
<comment type="catalytic activity">
    <reaction evidence="4">
        <text>prostaglandin H2 = thromboxane A2</text>
        <dbReference type="Rhea" id="RHEA:17137"/>
        <dbReference type="ChEBI" id="CHEBI:57405"/>
        <dbReference type="ChEBI" id="CHEBI:57445"/>
        <dbReference type="EC" id="5.3.99.5"/>
    </reaction>
    <physiologicalReaction direction="left-to-right" evidence="9">
        <dbReference type="Rhea" id="RHEA:17138"/>
    </physiologicalReaction>
</comment>
<comment type="catalytic activity">
    <reaction evidence="4">
        <text>prostaglandin H2 = (12S)-hydroxy-(5Z,8E,10E)-heptadecatrienoate + malonaldehyde</text>
        <dbReference type="Rhea" id="RHEA:48644"/>
        <dbReference type="ChEBI" id="CHEBI:57405"/>
        <dbReference type="ChEBI" id="CHEBI:90694"/>
        <dbReference type="ChEBI" id="CHEBI:566274"/>
    </reaction>
    <physiologicalReaction direction="left-to-right" evidence="9">
        <dbReference type="Rhea" id="RHEA:48645"/>
    </physiologicalReaction>
</comment>
<comment type="catalytic activity">
    <reaction evidence="4">
        <text>(13S)-hydroperoxy-(9Z,11E)-octadecadienoate = 13-oxo-(9Z,11E)-octadecadienoate + H2O</text>
        <dbReference type="Rhea" id="RHEA:48716"/>
        <dbReference type="ChEBI" id="CHEBI:15377"/>
        <dbReference type="ChEBI" id="CHEBI:57466"/>
        <dbReference type="ChEBI" id="CHEBI:90781"/>
    </reaction>
    <physiologicalReaction direction="left-to-right" evidence="9">
        <dbReference type="Rhea" id="RHEA:48717"/>
    </physiologicalReaction>
</comment>
<comment type="cofactor">
    <cofactor evidence="1">
        <name>heme</name>
        <dbReference type="ChEBI" id="CHEBI:30413"/>
    </cofactor>
</comment>
<comment type="pathway">
    <text evidence="4">Lipid metabolism; fatty acid metabolism.</text>
</comment>
<comment type="interaction">
    <interactant intactId="EBI-8633740">
        <id>Q96SQ9</id>
    </interactant>
    <interactant intactId="EBI-10173507">
        <id>Q6UY14-3</id>
        <label>ADAMTSL4</label>
    </interactant>
    <organismsDiffer>false</organismsDiffer>
    <experiments>3</experiments>
</comment>
<comment type="interaction">
    <interactant intactId="EBI-8633740">
        <id>Q96SQ9</id>
    </interactant>
    <interactant intactId="EBI-10171774">
        <id>P60410</id>
        <label>KRTAP10-8</label>
    </interactant>
    <organismsDiffer>false</organismsDiffer>
    <experiments>3</experiments>
</comment>
<comment type="subcellular location">
    <subcellularLocation>
        <location evidence="2">Endoplasmic reticulum membrane</location>
        <topology evidence="2">Peripheral membrane protein</topology>
    </subcellularLocation>
    <subcellularLocation>
        <location evidence="2">Microsome membrane</location>
        <topology evidence="2">Peripheral membrane protein</topology>
    </subcellularLocation>
</comment>
<comment type="alternative products">
    <event type="alternative splicing"/>
    <isoform>
        <id>Q96SQ9-1</id>
        <name>1</name>
        <sequence type="displayed"/>
    </isoform>
    <isoform>
        <id>Q96SQ9-2</id>
        <name>2</name>
        <sequence type="described" ref="VSP_010531"/>
    </isoform>
</comment>
<comment type="tissue specificity">
    <text evidence="2 3">Expressed at higher levels in extrahepatic tissues including trachea, lung, stomach, small intestine, colon, kidney, breast, placenta and spleen (PubMed:11181079, PubMed:12711469). Expressed in peripheral blood leukocytes (PubMed:11181079). Constitutively expressed in skin (at protein level) (PubMed:12711469).</text>
</comment>
<comment type="induction">
    <text evidence="3">Up-regulated in skin upon exposure to ultraviolet radiation or treatment with all-trans retinoic acid (substrate-inducible).</text>
</comment>
<comment type="similarity">
    <text evidence="7">Belongs to the cytochrome P450 family.</text>
</comment>
<gene>
    <name evidence="5 10" type="primary">CYP2S1</name>
    <name type="ORF">UNQ891/PRO1906</name>
</gene>
<dbReference type="EC" id="1.14.14.-" evidence="3"/>
<dbReference type="EC" id="4.2.1.152" evidence="4"/>
<dbReference type="EC" id="5.3.99.5" evidence="4"/>
<dbReference type="EMBL" id="AF335278">
    <property type="protein sequence ID" value="AAK13498.1"/>
    <property type="molecule type" value="mRNA"/>
</dbReference>
<dbReference type="EMBL" id="AY358603">
    <property type="protein sequence ID" value="AAQ88966.1"/>
    <property type="molecule type" value="mRNA"/>
</dbReference>
<dbReference type="EMBL" id="AK027605">
    <property type="protein sequence ID" value="BAB55227.1"/>
    <property type="molecule type" value="mRNA"/>
</dbReference>
<dbReference type="EMBL" id="BC033691">
    <property type="protein sequence ID" value="AAH33691.1"/>
    <property type="molecule type" value="mRNA"/>
</dbReference>
<dbReference type="CCDS" id="CCDS12573.1">
    <molecule id="Q96SQ9-1"/>
</dbReference>
<dbReference type="PIR" id="JC7613">
    <property type="entry name" value="JC7613"/>
</dbReference>
<dbReference type="RefSeq" id="NP_085125.1">
    <molecule id="Q96SQ9-1"/>
    <property type="nucleotide sequence ID" value="NM_030622.8"/>
</dbReference>
<dbReference type="RefSeq" id="XP_054176735.1">
    <molecule id="Q96SQ9-1"/>
    <property type="nucleotide sequence ID" value="XM_054320760.1"/>
</dbReference>
<dbReference type="SMR" id="Q96SQ9"/>
<dbReference type="BioGRID" id="118915">
    <property type="interactions" value="142"/>
</dbReference>
<dbReference type="FunCoup" id="Q96SQ9">
    <property type="interactions" value="940"/>
</dbReference>
<dbReference type="IntAct" id="Q96SQ9">
    <property type="interactions" value="81"/>
</dbReference>
<dbReference type="MINT" id="Q96SQ9"/>
<dbReference type="STRING" id="9606.ENSP00000308032"/>
<dbReference type="BindingDB" id="Q96SQ9"/>
<dbReference type="ChEMBL" id="CHEMBL4523986"/>
<dbReference type="SwissLipids" id="SLP:000001465"/>
<dbReference type="GlyGen" id="Q96SQ9">
    <property type="glycosylation" value="1 site"/>
</dbReference>
<dbReference type="iPTMnet" id="Q96SQ9"/>
<dbReference type="PhosphoSitePlus" id="Q96SQ9"/>
<dbReference type="SwissPalm" id="Q96SQ9"/>
<dbReference type="BioMuta" id="CYP2S1"/>
<dbReference type="DMDM" id="48428134"/>
<dbReference type="jPOST" id="Q96SQ9"/>
<dbReference type="MassIVE" id="Q96SQ9"/>
<dbReference type="PaxDb" id="9606-ENSP00000308032"/>
<dbReference type="PeptideAtlas" id="Q96SQ9"/>
<dbReference type="ProteomicsDB" id="78138">
    <molecule id="Q96SQ9-1"/>
</dbReference>
<dbReference type="ProteomicsDB" id="78139">
    <molecule id="Q96SQ9-2"/>
</dbReference>
<dbReference type="Pumba" id="Q96SQ9"/>
<dbReference type="Antibodypedia" id="45241">
    <property type="antibodies" value="207 antibodies from 29 providers"/>
</dbReference>
<dbReference type="DNASU" id="29785"/>
<dbReference type="Ensembl" id="ENST00000310054.9">
    <molecule id="Q96SQ9-1"/>
    <property type="protein sequence ID" value="ENSP00000308032.3"/>
    <property type="gene ID" value="ENSG00000167600.14"/>
</dbReference>
<dbReference type="GeneID" id="29785"/>
<dbReference type="KEGG" id="hsa:29785"/>
<dbReference type="MANE-Select" id="ENST00000310054.9">
    <property type="protein sequence ID" value="ENSP00000308032.3"/>
    <property type="RefSeq nucleotide sequence ID" value="NM_030622.8"/>
    <property type="RefSeq protein sequence ID" value="NP_085125.1"/>
</dbReference>
<dbReference type="UCSC" id="uc002opw.4">
    <molecule id="Q96SQ9-1"/>
    <property type="organism name" value="human"/>
</dbReference>
<dbReference type="AGR" id="HGNC:15654"/>
<dbReference type="CTD" id="29785"/>
<dbReference type="DisGeNET" id="29785"/>
<dbReference type="GeneCards" id="CYP2S1"/>
<dbReference type="HGNC" id="HGNC:15654">
    <property type="gene designation" value="CYP2S1"/>
</dbReference>
<dbReference type="HPA" id="ENSG00000167600">
    <property type="expression patterns" value="Group enriched (intestine, stomach)"/>
</dbReference>
<dbReference type="MIM" id="611529">
    <property type="type" value="gene"/>
</dbReference>
<dbReference type="neXtProt" id="NX_Q96SQ9"/>
<dbReference type="OpenTargets" id="ENSG00000167600"/>
<dbReference type="PharmGKB" id="PA27113"/>
<dbReference type="VEuPathDB" id="HostDB:ENSG00000167600"/>
<dbReference type="eggNOG" id="KOG0156">
    <property type="taxonomic scope" value="Eukaryota"/>
</dbReference>
<dbReference type="GeneTree" id="ENSGT00940000162131"/>
<dbReference type="HOGENOM" id="CLU_001570_22_3_1"/>
<dbReference type="InParanoid" id="Q96SQ9"/>
<dbReference type="OMA" id="WPVDIFP"/>
<dbReference type="OrthoDB" id="3934656at2759"/>
<dbReference type="PAN-GO" id="Q96SQ9">
    <property type="GO annotations" value="8 GO annotations based on evolutionary models"/>
</dbReference>
<dbReference type="PhylomeDB" id="Q96SQ9"/>
<dbReference type="TreeFam" id="TF352043"/>
<dbReference type="PathwayCommons" id="Q96SQ9"/>
<dbReference type="Reactome" id="R-HSA-211958">
    <property type="pathway name" value="Miscellaneous substrates"/>
</dbReference>
<dbReference type="Reactome" id="R-HSA-211981">
    <property type="pathway name" value="Xenobiotics"/>
</dbReference>
<dbReference type="Reactome" id="R-HSA-211999">
    <property type="pathway name" value="CYP2E1 reactions"/>
</dbReference>
<dbReference type="SignaLink" id="Q96SQ9"/>
<dbReference type="UniPathway" id="UPA00199"/>
<dbReference type="BioGRID-ORCS" id="29785">
    <property type="hits" value="18 hits in 1152 CRISPR screens"/>
</dbReference>
<dbReference type="ChiTaRS" id="CYP2S1">
    <property type="organism name" value="human"/>
</dbReference>
<dbReference type="GeneWiki" id="CYP2S1"/>
<dbReference type="GenomeRNAi" id="29785"/>
<dbReference type="Pharos" id="Q96SQ9">
    <property type="development level" value="Tbio"/>
</dbReference>
<dbReference type="PRO" id="PR:Q96SQ9"/>
<dbReference type="Proteomes" id="UP000005640">
    <property type="component" value="Chromosome 19"/>
</dbReference>
<dbReference type="RNAct" id="Q96SQ9">
    <property type="molecule type" value="protein"/>
</dbReference>
<dbReference type="Bgee" id="ENSG00000167600">
    <property type="expression patterns" value="Expressed in ileal mucosa and 120 other cell types or tissues"/>
</dbReference>
<dbReference type="ExpressionAtlas" id="Q96SQ9">
    <property type="expression patterns" value="baseline and differential"/>
</dbReference>
<dbReference type="GO" id="GO:0005737">
    <property type="term" value="C:cytoplasm"/>
    <property type="evidence" value="ECO:0000318"/>
    <property type="project" value="GO_Central"/>
</dbReference>
<dbReference type="GO" id="GO:0005783">
    <property type="term" value="C:endoplasmic reticulum"/>
    <property type="evidence" value="ECO:0000314"/>
    <property type="project" value="HPA"/>
</dbReference>
<dbReference type="GO" id="GO:0005789">
    <property type="term" value="C:endoplasmic reticulum membrane"/>
    <property type="evidence" value="ECO:0000304"/>
    <property type="project" value="Reactome"/>
</dbReference>
<dbReference type="GO" id="GO:0043231">
    <property type="term" value="C:intracellular membrane-bounded organelle"/>
    <property type="evidence" value="ECO:0000318"/>
    <property type="project" value="GO_Central"/>
</dbReference>
<dbReference type="GO" id="GO:0036134">
    <property type="term" value="F:12-hydroxyheptadecatrienoic acid synthase activity"/>
    <property type="evidence" value="ECO:0007669"/>
    <property type="project" value="RHEA"/>
</dbReference>
<dbReference type="GO" id="GO:0008392">
    <property type="term" value="F:arachidonate epoxygenase activity"/>
    <property type="evidence" value="ECO:0000318"/>
    <property type="project" value="GO_Central"/>
</dbReference>
<dbReference type="GO" id="GO:0020037">
    <property type="term" value="F:heme binding"/>
    <property type="evidence" value="ECO:0000318"/>
    <property type="project" value="GO_Central"/>
</dbReference>
<dbReference type="GO" id="GO:0016836">
    <property type="term" value="F:hydro-lyase activity"/>
    <property type="evidence" value="ECO:0000314"/>
    <property type="project" value="UniProtKB"/>
</dbReference>
<dbReference type="GO" id="GO:0106256">
    <property type="term" value="F:hydroperoxy icosatetraenoate dehydratase activity"/>
    <property type="evidence" value="ECO:0007669"/>
    <property type="project" value="UniProtKB-EC"/>
</dbReference>
<dbReference type="GO" id="GO:0005506">
    <property type="term" value="F:iron ion binding"/>
    <property type="evidence" value="ECO:0007669"/>
    <property type="project" value="InterPro"/>
</dbReference>
<dbReference type="GO" id="GO:0004497">
    <property type="term" value="F:monooxygenase activity"/>
    <property type="evidence" value="ECO:0000314"/>
    <property type="project" value="UniProtKB"/>
</dbReference>
<dbReference type="GO" id="GO:0016712">
    <property type="term" value="F:oxidoreductase activity, acting on paired donors, with incorporation or reduction of molecular oxygen, reduced flavin or flavoprotein as one donor, and incorporation of one atom of oxygen"/>
    <property type="evidence" value="ECO:0000318"/>
    <property type="project" value="GO_Central"/>
</dbReference>
<dbReference type="GO" id="GO:0008401">
    <property type="term" value="F:retinoic acid 4-hydroxylase activity"/>
    <property type="evidence" value="ECO:0000304"/>
    <property type="project" value="Reactome"/>
</dbReference>
<dbReference type="GO" id="GO:0004796">
    <property type="term" value="F:thromboxane-A synthase activity"/>
    <property type="evidence" value="ECO:0000314"/>
    <property type="project" value="UniProtKB"/>
</dbReference>
<dbReference type="GO" id="GO:1903604">
    <property type="term" value="P:cytochrome metabolic process"/>
    <property type="evidence" value="ECO:0000304"/>
    <property type="project" value="Reactome"/>
</dbReference>
<dbReference type="GO" id="GO:0019373">
    <property type="term" value="P:epoxygenase P450 pathway"/>
    <property type="evidence" value="ECO:0000318"/>
    <property type="project" value="GO_Central"/>
</dbReference>
<dbReference type="GO" id="GO:0006690">
    <property type="term" value="P:icosanoid metabolic process"/>
    <property type="evidence" value="ECO:0000314"/>
    <property type="project" value="UniProtKB"/>
</dbReference>
<dbReference type="GO" id="GO:0006693">
    <property type="term" value="P:prostaglandin metabolic process"/>
    <property type="evidence" value="ECO:0000314"/>
    <property type="project" value="UniProtKB"/>
</dbReference>
<dbReference type="GO" id="GO:0042573">
    <property type="term" value="P:retinoic acid metabolic process"/>
    <property type="evidence" value="ECO:0000314"/>
    <property type="project" value="UniProtKB"/>
</dbReference>
<dbReference type="GO" id="GO:0006805">
    <property type="term" value="P:xenobiotic metabolic process"/>
    <property type="evidence" value="ECO:0000318"/>
    <property type="project" value="GO_Central"/>
</dbReference>
<dbReference type="CDD" id="cd11026">
    <property type="entry name" value="CYP2"/>
    <property type="match status" value="1"/>
</dbReference>
<dbReference type="FunFam" id="1.10.630.10:FF:000238">
    <property type="entry name" value="Cytochrome P450 2A6"/>
    <property type="match status" value="1"/>
</dbReference>
<dbReference type="Gene3D" id="1.10.630.10">
    <property type="entry name" value="Cytochrome P450"/>
    <property type="match status" value="1"/>
</dbReference>
<dbReference type="InterPro" id="IPR001128">
    <property type="entry name" value="Cyt_P450"/>
</dbReference>
<dbReference type="InterPro" id="IPR017972">
    <property type="entry name" value="Cyt_P450_CS"/>
</dbReference>
<dbReference type="InterPro" id="IPR002401">
    <property type="entry name" value="Cyt_P450_E_grp-I"/>
</dbReference>
<dbReference type="InterPro" id="IPR008067">
    <property type="entry name" value="Cyt_P450_E_grp-I_CYP2A-like"/>
</dbReference>
<dbReference type="InterPro" id="IPR036396">
    <property type="entry name" value="Cyt_P450_sf"/>
</dbReference>
<dbReference type="InterPro" id="IPR050182">
    <property type="entry name" value="Cytochrome_P450_fam2"/>
</dbReference>
<dbReference type="PANTHER" id="PTHR24300:SF23">
    <property type="entry name" value="CYTOCHROME P450 2S1"/>
    <property type="match status" value="1"/>
</dbReference>
<dbReference type="PANTHER" id="PTHR24300">
    <property type="entry name" value="CYTOCHROME P450 508A4-RELATED"/>
    <property type="match status" value="1"/>
</dbReference>
<dbReference type="Pfam" id="PF00067">
    <property type="entry name" value="p450"/>
    <property type="match status" value="1"/>
</dbReference>
<dbReference type="PRINTS" id="PR00463">
    <property type="entry name" value="EP450I"/>
</dbReference>
<dbReference type="PRINTS" id="PR01684">
    <property type="entry name" value="EP450ICYP2A"/>
</dbReference>
<dbReference type="PRINTS" id="PR00385">
    <property type="entry name" value="P450"/>
</dbReference>
<dbReference type="SUPFAM" id="SSF48264">
    <property type="entry name" value="Cytochrome P450"/>
    <property type="match status" value="1"/>
</dbReference>
<dbReference type="PROSITE" id="PS00086">
    <property type="entry name" value="CYTOCHROME_P450"/>
    <property type="match status" value="1"/>
</dbReference>
<sequence length="504" mass="55817">MEATGTWALLLALALLLLLTLALSGTRARGHLPPGPTPLPLLGNLLQLRPGALYSGLMRLSKKYGPVFTIYLGPWRPVVVLVGQEAVREALGGQAEEFSGRGTVAMLEGTFDGHGVFFSNGERWRQLRKFTMLALRDLGMGKREGEELIQAEARCLVETFQGTEGRPFDPSLLLAQATSNVVCSLLFGLRFSYEDKEFQAVVRAAGGTLLGVSSQGGQTYEMFSWFLRPLPGPHKQLLHHVSTLAAFTVRQVQQHQGNLDASGPARDLVDAFLLKMAQEEQNPGTEFTNKNMLMTVIYLLFAGTMTVSTTVGYTLLLLMKYPHVQKWVREELNRELGAGQAPSLGDRTRLPYTDAVLHEAQRLLALVPMGIPRTLMRTTRFRGYTLPQGTEVFPLLGSILHDPNIFKHPEEFNPDRFLDADGRFRKHEAFLPFSLGKRVCLGEGLAKAELFLFFTTILQAFSLESPCPPDTLSLKPTVSGLFNIPPAFQLQVRPTDLHSTTQTR</sequence>
<accession>Q96SQ9</accession>
<accession>Q9BZ66</accession>
<name>CP2S1_HUMAN</name>
<proteinExistence type="evidence at protein level"/>
<feature type="chain" id="PRO_0000051780" description="Cytochrome P450 2S1">
    <location>
        <begin position="1"/>
        <end position="504"/>
    </location>
</feature>
<feature type="binding site" description="axial binding residue" evidence="1">
    <location>
        <position position="440"/>
    </location>
    <ligand>
        <name>heme</name>
        <dbReference type="ChEBI" id="CHEBI:30413"/>
    </ligand>
    <ligandPart>
        <name>Fe</name>
        <dbReference type="ChEBI" id="CHEBI:18248"/>
    </ligandPart>
</feature>
<feature type="splice variant" id="VSP_010531" description="In isoform 2." evidence="6">
    <original>FQLQVRPTDLHSTTQTR</original>
    <variation>STVGMDRVNVSRVYTAGSHIYTPAVVFRSLSHGPHAHLTHAAKMHNRTPIHNYKGHKATAGLAFHRHKYSPSAITST</variation>
    <location>
        <begin position="488"/>
        <end position="504"/>
    </location>
</feature>
<feature type="sequence variant" id="VAR_033820" description="In dbSNP:rs34971233.">
    <original>P</original>
    <variation>L</variation>
    <location>
        <position position="466"/>
    </location>
</feature>
<protein>
    <recommendedName>
        <fullName evidence="5">Cytochrome P450 2S1</fullName>
        <ecNumber evidence="3">1.14.14.-</ecNumber>
    </recommendedName>
    <alternativeName>
        <fullName>CYPIIS1</fullName>
    </alternativeName>
    <alternativeName>
        <fullName>Hydroperoxy icosatetraenoate dehydratase</fullName>
        <ecNumber evidence="4">4.2.1.152</ecNumber>
    </alternativeName>
    <alternativeName>
        <fullName>Thromboxane-A synthase</fullName>
        <ecNumber evidence="4">5.3.99.5</ecNumber>
    </alternativeName>
</protein>
<organism>
    <name type="scientific">Homo sapiens</name>
    <name type="common">Human</name>
    <dbReference type="NCBI Taxonomy" id="9606"/>
    <lineage>
        <taxon>Eukaryota</taxon>
        <taxon>Metazoa</taxon>
        <taxon>Chordata</taxon>
        <taxon>Craniata</taxon>
        <taxon>Vertebrata</taxon>
        <taxon>Euteleostomi</taxon>
        <taxon>Mammalia</taxon>
        <taxon>Eutheria</taxon>
        <taxon>Euarchontoglires</taxon>
        <taxon>Primates</taxon>
        <taxon>Haplorrhini</taxon>
        <taxon>Catarrhini</taxon>
        <taxon>Hominidae</taxon>
        <taxon>Homo</taxon>
    </lineage>
</organism>